<proteinExistence type="inferred from homology"/>
<gene>
    <name evidence="1" type="primary">sprT</name>
    <name type="ordered locus">ESA_00398</name>
</gene>
<accession>A7MJR0</accession>
<feature type="chain" id="PRO_1000046527" description="Protein SprT">
    <location>
        <begin position="1"/>
        <end position="166"/>
    </location>
</feature>
<feature type="domain" description="SprT-like" evidence="1">
    <location>
        <begin position="19"/>
        <end position="164"/>
    </location>
</feature>
<feature type="active site" evidence="1">
    <location>
        <position position="79"/>
    </location>
</feature>
<feature type="binding site" evidence="1">
    <location>
        <position position="78"/>
    </location>
    <ligand>
        <name>Zn(2+)</name>
        <dbReference type="ChEBI" id="CHEBI:29105"/>
    </ligand>
</feature>
<feature type="binding site" evidence="1">
    <location>
        <position position="82"/>
    </location>
    <ligand>
        <name>Zn(2+)</name>
        <dbReference type="ChEBI" id="CHEBI:29105"/>
    </ligand>
</feature>
<keyword id="KW-0963">Cytoplasm</keyword>
<keyword id="KW-0479">Metal-binding</keyword>
<keyword id="KW-1185">Reference proteome</keyword>
<keyword id="KW-0862">Zinc</keyword>
<name>SPRT_CROS8</name>
<comment type="cofactor">
    <cofactor evidence="1">
        <name>Zn(2+)</name>
        <dbReference type="ChEBI" id="CHEBI:29105"/>
    </cofactor>
    <text evidence="1">Binds 1 zinc ion.</text>
</comment>
<comment type="subcellular location">
    <subcellularLocation>
        <location evidence="1">Cytoplasm</location>
    </subcellularLocation>
</comment>
<comment type="similarity">
    <text evidence="1">Belongs to the SprT family.</text>
</comment>
<organism>
    <name type="scientific">Cronobacter sakazakii (strain ATCC BAA-894)</name>
    <name type="common">Enterobacter sakazakii</name>
    <dbReference type="NCBI Taxonomy" id="290339"/>
    <lineage>
        <taxon>Bacteria</taxon>
        <taxon>Pseudomonadati</taxon>
        <taxon>Pseudomonadota</taxon>
        <taxon>Gammaproteobacteria</taxon>
        <taxon>Enterobacterales</taxon>
        <taxon>Enterobacteriaceae</taxon>
        <taxon>Cronobacter</taxon>
    </lineage>
</organism>
<dbReference type="EMBL" id="CP000783">
    <property type="protein sequence ID" value="ABU75696.1"/>
    <property type="molecule type" value="Genomic_DNA"/>
</dbReference>
<dbReference type="RefSeq" id="WP_012123832.1">
    <property type="nucleotide sequence ID" value="NC_009778.1"/>
</dbReference>
<dbReference type="KEGG" id="esa:ESA_00398"/>
<dbReference type="HOGENOM" id="CLU_113336_0_1_6"/>
<dbReference type="Proteomes" id="UP000000260">
    <property type="component" value="Chromosome"/>
</dbReference>
<dbReference type="GO" id="GO:0005737">
    <property type="term" value="C:cytoplasm"/>
    <property type="evidence" value="ECO:0007669"/>
    <property type="project" value="UniProtKB-SubCell"/>
</dbReference>
<dbReference type="GO" id="GO:0008270">
    <property type="term" value="F:zinc ion binding"/>
    <property type="evidence" value="ECO:0007669"/>
    <property type="project" value="UniProtKB-UniRule"/>
</dbReference>
<dbReference type="GO" id="GO:0006950">
    <property type="term" value="P:response to stress"/>
    <property type="evidence" value="ECO:0007669"/>
    <property type="project" value="UniProtKB-ARBA"/>
</dbReference>
<dbReference type="Gene3D" id="3.30.2010.10">
    <property type="entry name" value="Metalloproteases ('zincins'), catalytic domain"/>
    <property type="match status" value="1"/>
</dbReference>
<dbReference type="HAMAP" id="MF_00746">
    <property type="entry name" value="SprT"/>
    <property type="match status" value="1"/>
</dbReference>
<dbReference type="InterPro" id="IPR006640">
    <property type="entry name" value="SprT-like_domain"/>
</dbReference>
<dbReference type="InterPro" id="IPR035240">
    <property type="entry name" value="SprT_Zn_ribbon"/>
</dbReference>
<dbReference type="InterPro" id="IPR023483">
    <property type="entry name" value="Uncharacterised_SprT"/>
</dbReference>
<dbReference type="NCBIfam" id="NF003421">
    <property type="entry name" value="PRK04860.1"/>
    <property type="match status" value="1"/>
</dbReference>
<dbReference type="PANTHER" id="PTHR38773">
    <property type="entry name" value="PROTEIN SPRT"/>
    <property type="match status" value="1"/>
</dbReference>
<dbReference type="PANTHER" id="PTHR38773:SF1">
    <property type="entry name" value="PROTEIN SPRT"/>
    <property type="match status" value="1"/>
</dbReference>
<dbReference type="Pfam" id="PF10263">
    <property type="entry name" value="SprT-like"/>
    <property type="match status" value="1"/>
</dbReference>
<dbReference type="Pfam" id="PF17283">
    <property type="entry name" value="Zn_ribbon_SprT"/>
    <property type="match status" value="1"/>
</dbReference>
<dbReference type="SMART" id="SM00731">
    <property type="entry name" value="SprT"/>
    <property type="match status" value="1"/>
</dbReference>
<dbReference type="PROSITE" id="PS00142">
    <property type="entry name" value="ZINC_PROTEASE"/>
    <property type="match status" value="1"/>
</dbReference>
<reference key="1">
    <citation type="journal article" date="2010" name="PLoS ONE">
        <title>Genome sequence of Cronobacter sakazakii BAA-894 and comparative genomic hybridization analysis with other Cronobacter species.</title>
        <authorList>
            <person name="Kucerova E."/>
            <person name="Clifton S.W."/>
            <person name="Xia X.Q."/>
            <person name="Long F."/>
            <person name="Porwollik S."/>
            <person name="Fulton L."/>
            <person name="Fronick C."/>
            <person name="Minx P."/>
            <person name="Kyung K."/>
            <person name="Warren W."/>
            <person name="Fulton R."/>
            <person name="Feng D."/>
            <person name="Wollam A."/>
            <person name="Shah N."/>
            <person name="Bhonagiri V."/>
            <person name="Nash W.E."/>
            <person name="Hallsworth-Pepin K."/>
            <person name="Wilson R.K."/>
            <person name="McClelland M."/>
            <person name="Forsythe S.J."/>
        </authorList>
    </citation>
    <scope>NUCLEOTIDE SEQUENCE [LARGE SCALE GENOMIC DNA]</scope>
    <source>
        <strain>ATCC BAA-894</strain>
    </source>
</reference>
<protein>
    <recommendedName>
        <fullName evidence="1">Protein SprT</fullName>
    </recommendedName>
</protein>
<evidence type="ECO:0000255" key="1">
    <source>
        <dbReference type="HAMAP-Rule" id="MF_00746"/>
    </source>
</evidence>
<sequence>MKTPRLPIAIQQAVMRSLRDALARANLKLGRNYPEPKLVYQQRGTAAGTAWLESYEIRLNPVLLMENQQAFIDEVVPHELAHLLVWKHFGRVPPHGKEWKWMMESVLGVPARRTHQFELDSVRANTFPYRCRCQQHQLTIRRHNRVVRGETQYRCVRCGDTLVAEN</sequence>